<evidence type="ECO:0000255" key="1">
    <source>
        <dbReference type="HAMAP-Rule" id="MF_00473"/>
    </source>
</evidence>
<reference key="1">
    <citation type="journal article" date="2007" name="Microbiology">
        <title>Comparative analysis of the Corynebacterium glutamicum group and complete genome sequence of strain R.</title>
        <authorList>
            <person name="Yukawa H."/>
            <person name="Omumasaba C.A."/>
            <person name="Nonaka H."/>
            <person name="Kos P."/>
            <person name="Okai N."/>
            <person name="Suzuki N."/>
            <person name="Suda M."/>
            <person name="Tsuge Y."/>
            <person name="Watanabe J."/>
            <person name="Ikeda Y."/>
            <person name="Vertes A.A."/>
            <person name="Inui M."/>
        </authorList>
    </citation>
    <scope>NUCLEOTIDE SEQUENCE [LARGE SCALE GENOMIC DNA]</scope>
    <source>
        <strain>R</strain>
    </source>
</reference>
<gene>
    <name evidence="1" type="primary">pgi</name>
    <name type="ordered locus">cgR_0966</name>
</gene>
<feature type="chain" id="PRO_1000013961" description="Glucose-6-phosphate isomerase">
    <location>
        <begin position="1"/>
        <end position="540"/>
    </location>
</feature>
<feature type="active site" description="Proton donor" evidence="1">
    <location>
        <position position="351"/>
    </location>
</feature>
<feature type="active site" evidence="1">
    <location>
        <position position="382"/>
    </location>
</feature>
<feature type="active site" evidence="1">
    <location>
        <position position="506"/>
    </location>
</feature>
<comment type="function">
    <text evidence="1">Catalyzes the reversible isomerization of glucose-6-phosphate to fructose-6-phosphate.</text>
</comment>
<comment type="catalytic activity">
    <reaction evidence="1">
        <text>alpha-D-glucose 6-phosphate = beta-D-fructose 6-phosphate</text>
        <dbReference type="Rhea" id="RHEA:11816"/>
        <dbReference type="ChEBI" id="CHEBI:57634"/>
        <dbReference type="ChEBI" id="CHEBI:58225"/>
        <dbReference type="EC" id="5.3.1.9"/>
    </reaction>
</comment>
<comment type="pathway">
    <text evidence="1">Carbohydrate biosynthesis; gluconeogenesis.</text>
</comment>
<comment type="pathway">
    <text evidence="1">Carbohydrate degradation; glycolysis; D-glyceraldehyde 3-phosphate and glycerone phosphate from D-glucose: step 2/4.</text>
</comment>
<comment type="subcellular location">
    <subcellularLocation>
        <location evidence="1">Cytoplasm</location>
    </subcellularLocation>
</comment>
<comment type="similarity">
    <text evidence="1">Belongs to the GPI family.</text>
</comment>
<sequence length="540" mass="59150">MADISTTQAWQDLTDHYSNFQATTLRELFKEENRAEKYTFSAAGLHVDLSKNLLDDATLTKLLALTEESGLRERIDAMFAGEHLNNTEDRAVLHTALRLPAEADLSVDGQDVAADVHEVLGRMRDFATALRSGNWLGYTGHTIKKIVNIGIGGSDLGPAMATKALRAYATAGISAEFVSNVDPADLVSVLEDLDAESTLFVVASKTFTTQETLSNARAARAWLVEKLGEEAVAKHFVAVSTNAEKVAEFGIDTDNMFGFWDWVGGRYSVDSAVGLSLMAVIGPRDFMRFLGGFHAMDEHFRTTKFEENVPILMALLGVWYSDFYGAETHAVLPYSEDLSRFAAYLQQLTMESNGKSVHRDGSPVSTGTGEIYWGEPGTNGQHAFFQLIHQGTRLVPADFIGFARPKQDLPAGERTMHDLLMSNFFAQTKVLAFGKNAEEIAAEGVAPELVNHKVMPGNRPTTTILAEELTPSILGALIALYEHIVMVQGVIWDINSFDQWGVELGKQQANDLAPAVSGEEDVDSGDSSTDSLIKWYRANR</sequence>
<accession>A4QCJ4</accession>
<protein>
    <recommendedName>
        <fullName evidence="1">Glucose-6-phosphate isomerase</fullName>
        <shortName evidence="1">GPI</shortName>
        <ecNumber evidence="1">5.3.1.9</ecNumber>
    </recommendedName>
    <alternativeName>
        <fullName evidence="1">Phosphoglucose isomerase</fullName>
        <shortName evidence="1">PGI</shortName>
    </alternativeName>
    <alternativeName>
        <fullName evidence="1">Phosphohexose isomerase</fullName>
        <shortName evidence="1">PHI</shortName>
    </alternativeName>
</protein>
<organism>
    <name type="scientific">Corynebacterium glutamicum (strain R)</name>
    <dbReference type="NCBI Taxonomy" id="340322"/>
    <lineage>
        <taxon>Bacteria</taxon>
        <taxon>Bacillati</taxon>
        <taxon>Actinomycetota</taxon>
        <taxon>Actinomycetes</taxon>
        <taxon>Mycobacteriales</taxon>
        <taxon>Corynebacteriaceae</taxon>
        <taxon>Corynebacterium</taxon>
    </lineage>
</organism>
<keyword id="KW-0963">Cytoplasm</keyword>
<keyword id="KW-0312">Gluconeogenesis</keyword>
<keyword id="KW-0324">Glycolysis</keyword>
<keyword id="KW-0413">Isomerase</keyword>
<dbReference type="EC" id="5.3.1.9" evidence="1"/>
<dbReference type="EMBL" id="AP009044">
    <property type="protein sequence ID" value="BAF53941.1"/>
    <property type="molecule type" value="Genomic_DNA"/>
</dbReference>
<dbReference type="RefSeq" id="WP_003858374.1">
    <property type="nucleotide sequence ID" value="NC_009342.1"/>
</dbReference>
<dbReference type="SMR" id="A4QCJ4"/>
<dbReference type="KEGG" id="cgt:cgR_0966"/>
<dbReference type="HOGENOM" id="CLU_017947_3_1_11"/>
<dbReference type="PhylomeDB" id="A4QCJ4"/>
<dbReference type="UniPathway" id="UPA00109">
    <property type="reaction ID" value="UER00181"/>
</dbReference>
<dbReference type="UniPathway" id="UPA00138"/>
<dbReference type="Proteomes" id="UP000006698">
    <property type="component" value="Chromosome"/>
</dbReference>
<dbReference type="GO" id="GO:0005829">
    <property type="term" value="C:cytosol"/>
    <property type="evidence" value="ECO:0007669"/>
    <property type="project" value="TreeGrafter"/>
</dbReference>
<dbReference type="GO" id="GO:0097367">
    <property type="term" value="F:carbohydrate derivative binding"/>
    <property type="evidence" value="ECO:0007669"/>
    <property type="project" value="InterPro"/>
</dbReference>
<dbReference type="GO" id="GO:0004347">
    <property type="term" value="F:glucose-6-phosphate isomerase activity"/>
    <property type="evidence" value="ECO:0007669"/>
    <property type="project" value="UniProtKB-UniRule"/>
</dbReference>
<dbReference type="GO" id="GO:0048029">
    <property type="term" value="F:monosaccharide binding"/>
    <property type="evidence" value="ECO:0007669"/>
    <property type="project" value="TreeGrafter"/>
</dbReference>
<dbReference type="GO" id="GO:0006094">
    <property type="term" value="P:gluconeogenesis"/>
    <property type="evidence" value="ECO:0007669"/>
    <property type="project" value="UniProtKB-UniRule"/>
</dbReference>
<dbReference type="GO" id="GO:0051156">
    <property type="term" value="P:glucose 6-phosphate metabolic process"/>
    <property type="evidence" value="ECO:0007669"/>
    <property type="project" value="TreeGrafter"/>
</dbReference>
<dbReference type="GO" id="GO:0006096">
    <property type="term" value="P:glycolytic process"/>
    <property type="evidence" value="ECO:0007669"/>
    <property type="project" value="UniProtKB-UniRule"/>
</dbReference>
<dbReference type="CDD" id="cd05015">
    <property type="entry name" value="SIS_PGI_1"/>
    <property type="match status" value="1"/>
</dbReference>
<dbReference type="CDD" id="cd05016">
    <property type="entry name" value="SIS_PGI_2"/>
    <property type="match status" value="1"/>
</dbReference>
<dbReference type="FunFam" id="3.40.50.10490:FF:000018">
    <property type="entry name" value="Glucose-6-phosphate isomerase"/>
    <property type="match status" value="1"/>
</dbReference>
<dbReference type="Gene3D" id="1.10.1390.10">
    <property type="match status" value="1"/>
</dbReference>
<dbReference type="Gene3D" id="3.40.50.10490">
    <property type="entry name" value="Glucose-6-phosphate isomerase like protein, domain 1"/>
    <property type="match status" value="2"/>
</dbReference>
<dbReference type="HAMAP" id="MF_00473">
    <property type="entry name" value="G6P_isomerase"/>
    <property type="match status" value="1"/>
</dbReference>
<dbReference type="InterPro" id="IPR001672">
    <property type="entry name" value="G6P_Isomerase"/>
</dbReference>
<dbReference type="InterPro" id="IPR023096">
    <property type="entry name" value="G6P_Isomerase_C"/>
</dbReference>
<dbReference type="InterPro" id="IPR018189">
    <property type="entry name" value="Phosphoglucose_isomerase_CS"/>
</dbReference>
<dbReference type="InterPro" id="IPR046348">
    <property type="entry name" value="SIS_dom_sf"/>
</dbReference>
<dbReference type="InterPro" id="IPR035476">
    <property type="entry name" value="SIS_PGI_1"/>
</dbReference>
<dbReference type="InterPro" id="IPR035482">
    <property type="entry name" value="SIS_PGI_2"/>
</dbReference>
<dbReference type="NCBIfam" id="NF001211">
    <property type="entry name" value="PRK00179.1"/>
    <property type="match status" value="1"/>
</dbReference>
<dbReference type="PANTHER" id="PTHR11469">
    <property type="entry name" value="GLUCOSE-6-PHOSPHATE ISOMERASE"/>
    <property type="match status" value="1"/>
</dbReference>
<dbReference type="PANTHER" id="PTHR11469:SF1">
    <property type="entry name" value="GLUCOSE-6-PHOSPHATE ISOMERASE"/>
    <property type="match status" value="1"/>
</dbReference>
<dbReference type="Pfam" id="PF00342">
    <property type="entry name" value="PGI"/>
    <property type="match status" value="1"/>
</dbReference>
<dbReference type="PRINTS" id="PR00662">
    <property type="entry name" value="G6PISOMERASE"/>
</dbReference>
<dbReference type="SUPFAM" id="SSF53697">
    <property type="entry name" value="SIS domain"/>
    <property type="match status" value="1"/>
</dbReference>
<dbReference type="PROSITE" id="PS00765">
    <property type="entry name" value="P_GLUCOSE_ISOMERASE_1"/>
    <property type="match status" value="1"/>
</dbReference>
<dbReference type="PROSITE" id="PS00174">
    <property type="entry name" value="P_GLUCOSE_ISOMERASE_2"/>
    <property type="match status" value="1"/>
</dbReference>
<dbReference type="PROSITE" id="PS51463">
    <property type="entry name" value="P_GLUCOSE_ISOMERASE_3"/>
    <property type="match status" value="1"/>
</dbReference>
<proteinExistence type="inferred from homology"/>
<name>G6PI_CORGB</name>